<accession>Q8G2K1</accession>
<accession>G0K674</accession>
<comment type="function">
    <text evidence="1">Channel that opens in response to stretch forces in the membrane lipid bilayer. May participate in the regulation of osmotic pressure changes within the cell.</text>
</comment>
<comment type="subunit">
    <text evidence="1">Homopentamer.</text>
</comment>
<comment type="subcellular location">
    <subcellularLocation>
        <location evidence="1">Cell inner membrane</location>
        <topology evidence="1">Multi-pass membrane protein</topology>
    </subcellularLocation>
</comment>
<comment type="similarity">
    <text evidence="1">Belongs to the MscL family.</text>
</comment>
<reference key="1">
    <citation type="journal article" date="2002" name="Proc. Natl. Acad. Sci. U.S.A.">
        <title>The Brucella suis genome reveals fundamental similarities between animal and plant pathogens and symbionts.</title>
        <authorList>
            <person name="Paulsen I.T."/>
            <person name="Seshadri R."/>
            <person name="Nelson K.E."/>
            <person name="Eisen J.A."/>
            <person name="Heidelberg J.F."/>
            <person name="Read T.D."/>
            <person name="Dodson R.J."/>
            <person name="Umayam L.A."/>
            <person name="Brinkac L.M."/>
            <person name="Beanan M.J."/>
            <person name="Daugherty S.C."/>
            <person name="DeBoy R.T."/>
            <person name="Durkin A.S."/>
            <person name="Kolonay J.F."/>
            <person name="Madupu R."/>
            <person name="Nelson W.C."/>
            <person name="Ayodeji B."/>
            <person name="Kraul M."/>
            <person name="Shetty J."/>
            <person name="Malek J.A."/>
            <person name="Van Aken S.E."/>
            <person name="Riedmuller S."/>
            <person name="Tettelin H."/>
            <person name="Gill S.R."/>
            <person name="White O."/>
            <person name="Salzberg S.L."/>
            <person name="Hoover D.L."/>
            <person name="Lindler L.E."/>
            <person name="Halling S.M."/>
            <person name="Boyle S.M."/>
            <person name="Fraser C.M."/>
        </authorList>
    </citation>
    <scope>NUCLEOTIDE SEQUENCE [LARGE SCALE GENOMIC DNA]</scope>
    <source>
        <strain>1330</strain>
    </source>
</reference>
<reference key="2">
    <citation type="journal article" date="2011" name="J. Bacteriol.">
        <title>Revised genome sequence of Brucella suis 1330.</title>
        <authorList>
            <person name="Tae H."/>
            <person name="Shallom S."/>
            <person name="Settlage R."/>
            <person name="Preston D."/>
            <person name="Adams L.G."/>
            <person name="Garner H.R."/>
        </authorList>
    </citation>
    <scope>NUCLEOTIDE SEQUENCE [LARGE SCALE GENOMIC DNA]</scope>
    <source>
        <strain>1330</strain>
    </source>
</reference>
<feature type="chain" id="PRO_0000192436" description="Large-conductance mechanosensitive channel">
    <location>
        <begin position="1"/>
        <end position="138"/>
    </location>
</feature>
<feature type="transmembrane region" description="Helical" evidence="1">
    <location>
        <begin position="15"/>
        <end position="35"/>
    </location>
</feature>
<feature type="transmembrane region" description="Helical" evidence="1">
    <location>
        <begin position="38"/>
        <end position="58"/>
    </location>
</feature>
<feature type="transmembrane region" description="Helical" evidence="1">
    <location>
        <begin position="80"/>
        <end position="100"/>
    </location>
</feature>
<keyword id="KW-0997">Cell inner membrane</keyword>
<keyword id="KW-1003">Cell membrane</keyword>
<keyword id="KW-0407">Ion channel</keyword>
<keyword id="KW-0406">Ion transport</keyword>
<keyword id="KW-0472">Membrane</keyword>
<keyword id="KW-0812">Transmembrane</keyword>
<keyword id="KW-1133">Transmembrane helix</keyword>
<keyword id="KW-0813">Transport</keyword>
<evidence type="ECO:0000255" key="1">
    <source>
        <dbReference type="HAMAP-Rule" id="MF_00115"/>
    </source>
</evidence>
<name>MSCL_BRUSU</name>
<organism>
    <name type="scientific">Brucella suis biovar 1 (strain 1330)</name>
    <dbReference type="NCBI Taxonomy" id="204722"/>
    <lineage>
        <taxon>Bacteria</taxon>
        <taxon>Pseudomonadati</taxon>
        <taxon>Pseudomonadota</taxon>
        <taxon>Alphaproteobacteria</taxon>
        <taxon>Hyphomicrobiales</taxon>
        <taxon>Brucellaceae</taxon>
        <taxon>Brucella/Ochrobactrum group</taxon>
        <taxon>Brucella</taxon>
    </lineage>
</organism>
<protein>
    <recommendedName>
        <fullName evidence="1">Large-conductance mechanosensitive channel</fullName>
    </recommendedName>
</protein>
<dbReference type="EMBL" id="AE014291">
    <property type="protein sequence ID" value="AAN29267.1"/>
    <property type="molecule type" value="Genomic_DNA"/>
</dbReference>
<dbReference type="EMBL" id="CP002997">
    <property type="protein sequence ID" value="AEM17680.1"/>
    <property type="molecule type" value="Genomic_DNA"/>
</dbReference>
<dbReference type="RefSeq" id="WP_002963483.1">
    <property type="nucleotide sequence ID" value="NZ_KN046804.1"/>
</dbReference>
<dbReference type="SMR" id="Q8G2K1"/>
<dbReference type="GeneID" id="97534292"/>
<dbReference type="KEGG" id="bms:BR0318"/>
<dbReference type="KEGG" id="bsi:BS1330_I0319"/>
<dbReference type="PATRIC" id="fig|204722.21.peg.2478"/>
<dbReference type="HOGENOM" id="CLU_095787_0_1_5"/>
<dbReference type="PhylomeDB" id="Q8G2K1"/>
<dbReference type="Proteomes" id="UP000007104">
    <property type="component" value="Chromosome I"/>
</dbReference>
<dbReference type="GO" id="GO:0005886">
    <property type="term" value="C:plasma membrane"/>
    <property type="evidence" value="ECO:0007669"/>
    <property type="project" value="UniProtKB-SubCell"/>
</dbReference>
<dbReference type="GO" id="GO:0008381">
    <property type="term" value="F:mechanosensitive monoatomic ion channel activity"/>
    <property type="evidence" value="ECO:0007669"/>
    <property type="project" value="UniProtKB-UniRule"/>
</dbReference>
<dbReference type="Gene3D" id="1.10.1200.120">
    <property type="entry name" value="Large-conductance mechanosensitive channel, MscL, domain 1"/>
    <property type="match status" value="1"/>
</dbReference>
<dbReference type="HAMAP" id="MF_00115">
    <property type="entry name" value="MscL"/>
    <property type="match status" value="1"/>
</dbReference>
<dbReference type="InterPro" id="IPR019823">
    <property type="entry name" value="Mechanosensitive_channel_CS"/>
</dbReference>
<dbReference type="InterPro" id="IPR001185">
    <property type="entry name" value="MS_channel"/>
</dbReference>
<dbReference type="InterPro" id="IPR037673">
    <property type="entry name" value="MSC/AndL"/>
</dbReference>
<dbReference type="InterPro" id="IPR036019">
    <property type="entry name" value="MscL_channel"/>
</dbReference>
<dbReference type="NCBIfam" id="TIGR00220">
    <property type="entry name" value="mscL"/>
    <property type="match status" value="1"/>
</dbReference>
<dbReference type="NCBIfam" id="NF001843">
    <property type="entry name" value="PRK00567.1-4"/>
    <property type="match status" value="1"/>
</dbReference>
<dbReference type="NCBIfam" id="NF010557">
    <property type="entry name" value="PRK13952.1"/>
    <property type="match status" value="1"/>
</dbReference>
<dbReference type="PANTHER" id="PTHR30266:SF2">
    <property type="entry name" value="LARGE-CONDUCTANCE MECHANOSENSITIVE CHANNEL"/>
    <property type="match status" value="1"/>
</dbReference>
<dbReference type="PANTHER" id="PTHR30266">
    <property type="entry name" value="MECHANOSENSITIVE CHANNEL MSCL"/>
    <property type="match status" value="1"/>
</dbReference>
<dbReference type="Pfam" id="PF01741">
    <property type="entry name" value="MscL"/>
    <property type="match status" value="1"/>
</dbReference>
<dbReference type="PRINTS" id="PR01264">
    <property type="entry name" value="MECHCHANNEL"/>
</dbReference>
<dbReference type="SUPFAM" id="SSF81330">
    <property type="entry name" value="Gated mechanosensitive channel"/>
    <property type="match status" value="1"/>
</dbReference>
<dbReference type="PROSITE" id="PS01327">
    <property type="entry name" value="MSCL"/>
    <property type="match status" value="1"/>
</dbReference>
<sequence length="138" mass="14899">MLKEFQEFALKGNMVDLAIGVIIGGAFGGLVNSIVNDIIMPIIGLITGGIDFSNMFIQLAGDPKTTLAAAREAGATIAYGNFITLLINFLIIAWVLFLVVKLMNRLKKREEAKPAPAAPSEEVLLTEIRDILAKQQKA</sequence>
<gene>
    <name evidence="1" type="primary">mscL</name>
    <name type="ordered locus">BR0318</name>
    <name type="ordered locus">BS1330_I0319</name>
</gene>
<proteinExistence type="inferred from homology"/>